<keyword id="KW-0997">Cell inner membrane</keyword>
<keyword id="KW-1003">Cell membrane</keyword>
<keyword id="KW-0342">GTP-binding</keyword>
<keyword id="KW-0378">Hydrolase</keyword>
<keyword id="KW-0472">Membrane</keyword>
<keyword id="KW-0547">Nucleotide-binding</keyword>
<keyword id="KW-0648">Protein biosynthesis</keyword>
<reference key="1">
    <citation type="submission" date="2009-01" db="EMBL/GenBank/DDBJ databases">
        <title>Complete sequence of Desulfovibrio desulfuricans subsp. desulfuricans str. ATCC 27774.</title>
        <authorList>
            <consortium name="US DOE Joint Genome Institute"/>
            <person name="Lucas S."/>
            <person name="Copeland A."/>
            <person name="Lapidus A."/>
            <person name="Glavina del Rio T."/>
            <person name="Tice H."/>
            <person name="Bruce D."/>
            <person name="Goodwin L."/>
            <person name="Pitluck S."/>
            <person name="Sims D."/>
            <person name="Lu M."/>
            <person name="Kiss H."/>
            <person name="Meineke L."/>
            <person name="Brettin T."/>
            <person name="Detter J.C."/>
            <person name="Han C."/>
            <person name="Larimer F."/>
            <person name="Land M."/>
            <person name="Hauser L."/>
            <person name="Kyrpides N."/>
            <person name="Ovchinnikova G."/>
            <person name="Hazen T.C."/>
        </authorList>
    </citation>
    <scope>NUCLEOTIDE SEQUENCE [LARGE SCALE GENOMIC DNA]</scope>
    <source>
        <strain>ATCC 27774 / DSM 6949 / MB</strain>
    </source>
</reference>
<comment type="function">
    <text evidence="1">Required for accurate and efficient protein synthesis under certain stress conditions. May act as a fidelity factor of the translation reaction, by catalyzing a one-codon backward translocation of tRNAs on improperly translocated ribosomes. Back-translocation proceeds from a post-translocation (POST) complex to a pre-translocation (PRE) complex, thus giving elongation factor G a second chance to translocate the tRNAs correctly. Binds to ribosomes in a GTP-dependent manner.</text>
</comment>
<comment type="catalytic activity">
    <reaction evidence="1">
        <text>GTP + H2O = GDP + phosphate + H(+)</text>
        <dbReference type="Rhea" id="RHEA:19669"/>
        <dbReference type="ChEBI" id="CHEBI:15377"/>
        <dbReference type="ChEBI" id="CHEBI:15378"/>
        <dbReference type="ChEBI" id="CHEBI:37565"/>
        <dbReference type="ChEBI" id="CHEBI:43474"/>
        <dbReference type="ChEBI" id="CHEBI:58189"/>
        <dbReference type="EC" id="3.6.5.n1"/>
    </reaction>
</comment>
<comment type="subcellular location">
    <subcellularLocation>
        <location evidence="1">Cell inner membrane</location>
        <topology evidence="1">Peripheral membrane protein</topology>
        <orientation evidence="1">Cytoplasmic side</orientation>
    </subcellularLocation>
</comment>
<comment type="similarity">
    <text evidence="1">Belongs to the TRAFAC class translation factor GTPase superfamily. Classic translation factor GTPase family. LepA subfamily.</text>
</comment>
<sequence length="601" mass="67176">MVKQENIRNFCIIAHIDHGKSTLADRILELTQVVSQREARQQYLDRMDLERERGITIKAQTVRIPYIAADGQEYELNLIDTPGHVDFNYEVSRSLAACEGALLVVDATQGVEAQTLANVYLALDHDHEVIPVLNKIDLPSAEVDRVKAEIEESIGLDCSQALPVSAKTGMGVDAVLEAIVHHLPAPKGDRAAPLKALIFDSWYDSYQGVVVLFRIMDGSVRKGDTVRLMSTGKEYEVLRLGVFSPEPTDVKELFAGEVGFLCGSIKELGDARVGDTITHADRPAETAVPGFKEVKAMVFCGLYPTESEDYENLKAALEKLQLNDAAFSYEPETSQALGFGFRCGFLGLLHMEIIQERLEREFEVGLIATAPSVVYKVVTMDGKTLEIDNPSHLPDPTKIDTLYEPYVSMDIHVPNEYVGNVMKLCEEKRGTQKNLHYLAANRVVVTYELPFAEIVYDFFDRLKSATRGYASMDYHPLDYRASDLVRLDIMLNSEPVDALAVIVHRDRAYTYGRGLALKLKRTIPRQLFQVAIQAAIGQKIIARETVSAFRKDVTAKCYGGDISRKRKLLEKQKEGKRRMKRMGNVELPQEAFLAALKVGDE</sequence>
<organism>
    <name type="scientific">Desulfovibrio desulfuricans (strain ATCC 27774 / DSM 6949 / MB)</name>
    <dbReference type="NCBI Taxonomy" id="525146"/>
    <lineage>
        <taxon>Bacteria</taxon>
        <taxon>Pseudomonadati</taxon>
        <taxon>Thermodesulfobacteriota</taxon>
        <taxon>Desulfovibrionia</taxon>
        <taxon>Desulfovibrionales</taxon>
        <taxon>Desulfovibrionaceae</taxon>
        <taxon>Desulfovibrio</taxon>
    </lineage>
</organism>
<dbReference type="EC" id="3.6.5.n1" evidence="1"/>
<dbReference type="EMBL" id="CP001358">
    <property type="protein sequence ID" value="ACL50089.1"/>
    <property type="molecule type" value="Genomic_DNA"/>
</dbReference>
<dbReference type="SMR" id="B8J444"/>
<dbReference type="STRING" id="525146.Ddes_2193"/>
<dbReference type="KEGG" id="dds:Ddes_2193"/>
<dbReference type="eggNOG" id="COG0481">
    <property type="taxonomic scope" value="Bacteria"/>
</dbReference>
<dbReference type="HOGENOM" id="CLU_009995_3_3_7"/>
<dbReference type="GO" id="GO:0005886">
    <property type="term" value="C:plasma membrane"/>
    <property type="evidence" value="ECO:0007669"/>
    <property type="project" value="UniProtKB-SubCell"/>
</dbReference>
<dbReference type="GO" id="GO:0005525">
    <property type="term" value="F:GTP binding"/>
    <property type="evidence" value="ECO:0007669"/>
    <property type="project" value="UniProtKB-UniRule"/>
</dbReference>
<dbReference type="GO" id="GO:0003924">
    <property type="term" value="F:GTPase activity"/>
    <property type="evidence" value="ECO:0007669"/>
    <property type="project" value="UniProtKB-UniRule"/>
</dbReference>
<dbReference type="GO" id="GO:0043022">
    <property type="term" value="F:ribosome binding"/>
    <property type="evidence" value="ECO:0007669"/>
    <property type="project" value="UniProtKB-UniRule"/>
</dbReference>
<dbReference type="GO" id="GO:0003746">
    <property type="term" value="F:translation elongation factor activity"/>
    <property type="evidence" value="ECO:0007669"/>
    <property type="project" value="UniProtKB-UniRule"/>
</dbReference>
<dbReference type="GO" id="GO:0045727">
    <property type="term" value="P:positive regulation of translation"/>
    <property type="evidence" value="ECO:0007669"/>
    <property type="project" value="UniProtKB-UniRule"/>
</dbReference>
<dbReference type="CDD" id="cd03699">
    <property type="entry name" value="EF4_II"/>
    <property type="match status" value="1"/>
</dbReference>
<dbReference type="CDD" id="cd16260">
    <property type="entry name" value="EF4_III"/>
    <property type="match status" value="1"/>
</dbReference>
<dbReference type="CDD" id="cd01890">
    <property type="entry name" value="LepA"/>
    <property type="match status" value="1"/>
</dbReference>
<dbReference type="CDD" id="cd03709">
    <property type="entry name" value="lepA_C"/>
    <property type="match status" value="1"/>
</dbReference>
<dbReference type="FunFam" id="3.40.50.300:FF:000078">
    <property type="entry name" value="Elongation factor 4"/>
    <property type="match status" value="1"/>
</dbReference>
<dbReference type="FunFam" id="2.40.30.10:FF:000015">
    <property type="entry name" value="Translation factor GUF1, mitochondrial"/>
    <property type="match status" value="1"/>
</dbReference>
<dbReference type="FunFam" id="3.30.70.240:FF:000007">
    <property type="entry name" value="Translation factor GUF1, mitochondrial"/>
    <property type="match status" value="1"/>
</dbReference>
<dbReference type="FunFam" id="3.30.70.2570:FF:000001">
    <property type="entry name" value="Translation factor GUF1, mitochondrial"/>
    <property type="match status" value="1"/>
</dbReference>
<dbReference type="FunFam" id="3.30.70.870:FF:000004">
    <property type="entry name" value="Translation factor GUF1, mitochondrial"/>
    <property type="match status" value="1"/>
</dbReference>
<dbReference type="Gene3D" id="3.30.70.240">
    <property type="match status" value="1"/>
</dbReference>
<dbReference type="Gene3D" id="3.30.70.2570">
    <property type="entry name" value="Elongation factor 4, C-terminal domain"/>
    <property type="match status" value="1"/>
</dbReference>
<dbReference type="Gene3D" id="3.30.70.870">
    <property type="entry name" value="Elongation Factor G (Translational Gtpase), domain 3"/>
    <property type="match status" value="1"/>
</dbReference>
<dbReference type="Gene3D" id="3.40.50.300">
    <property type="entry name" value="P-loop containing nucleotide triphosphate hydrolases"/>
    <property type="match status" value="1"/>
</dbReference>
<dbReference type="Gene3D" id="2.40.30.10">
    <property type="entry name" value="Translation factors"/>
    <property type="match status" value="1"/>
</dbReference>
<dbReference type="HAMAP" id="MF_00071">
    <property type="entry name" value="LepA"/>
    <property type="match status" value="1"/>
</dbReference>
<dbReference type="InterPro" id="IPR006297">
    <property type="entry name" value="EF-4"/>
</dbReference>
<dbReference type="InterPro" id="IPR035647">
    <property type="entry name" value="EFG_III/V"/>
</dbReference>
<dbReference type="InterPro" id="IPR000640">
    <property type="entry name" value="EFG_V-like"/>
</dbReference>
<dbReference type="InterPro" id="IPR004161">
    <property type="entry name" value="EFTu-like_2"/>
</dbReference>
<dbReference type="InterPro" id="IPR031157">
    <property type="entry name" value="G_TR_CS"/>
</dbReference>
<dbReference type="InterPro" id="IPR038363">
    <property type="entry name" value="LepA_C_sf"/>
</dbReference>
<dbReference type="InterPro" id="IPR013842">
    <property type="entry name" value="LepA_CTD"/>
</dbReference>
<dbReference type="InterPro" id="IPR035654">
    <property type="entry name" value="LepA_IV"/>
</dbReference>
<dbReference type="InterPro" id="IPR027417">
    <property type="entry name" value="P-loop_NTPase"/>
</dbReference>
<dbReference type="InterPro" id="IPR005225">
    <property type="entry name" value="Small_GTP-bd"/>
</dbReference>
<dbReference type="InterPro" id="IPR000795">
    <property type="entry name" value="T_Tr_GTP-bd_dom"/>
</dbReference>
<dbReference type="NCBIfam" id="TIGR01393">
    <property type="entry name" value="lepA"/>
    <property type="match status" value="1"/>
</dbReference>
<dbReference type="NCBIfam" id="TIGR00231">
    <property type="entry name" value="small_GTP"/>
    <property type="match status" value="1"/>
</dbReference>
<dbReference type="PANTHER" id="PTHR43512:SF4">
    <property type="entry name" value="TRANSLATION FACTOR GUF1 HOMOLOG, CHLOROPLASTIC"/>
    <property type="match status" value="1"/>
</dbReference>
<dbReference type="PANTHER" id="PTHR43512">
    <property type="entry name" value="TRANSLATION FACTOR GUF1-RELATED"/>
    <property type="match status" value="1"/>
</dbReference>
<dbReference type="Pfam" id="PF00679">
    <property type="entry name" value="EFG_C"/>
    <property type="match status" value="1"/>
</dbReference>
<dbReference type="Pfam" id="PF00009">
    <property type="entry name" value="GTP_EFTU"/>
    <property type="match status" value="1"/>
</dbReference>
<dbReference type="Pfam" id="PF03144">
    <property type="entry name" value="GTP_EFTU_D2"/>
    <property type="match status" value="1"/>
</dbReference>
<dbReference type="Pfam" id="PF06421">
    <property type="entry name" value="LepA_C"/>
    <property type="match status" value="1"/>
</dbReference>
<dbReference type="PRINTS" id="PR00315">
    <property type="entry name" value="ELONGATNFCT"/>
</dbReference>
<dbReference type="SMART" id="SM00838">
    <property type="entry name" value="EFG_C"/>
    <property type="match status" value="1"/>
</dbReference>
<dbReference type="SUPFAM" id="SSF54980">
    <property type="entry name" value="EF-G C-terminal domain-like"/>
    <property type="match status" value="2"/>
</dbReference>
<dbReference type="SUPFAM" id="SSF52540">
    <property type="entry name" value="P-loop containing nucleoside triphosphate hydrolases"/>
    <property type="match status" value="1"/>
</dbReference>
<dbReference type="PROSITE" id="PS00301">
    <property type="entry name" value="G_TR_1"/>
    <property type="match status" value="1"/>
</dbReference>
<dbReference type="PROSITE" id="PS51722">
    <property type="entry name" value="G_TR_2"/>
    <property type="match status" value="1"/>
</dbReference>
<accession>B8J444</accession>
<evidence type="ECO:0000255" key="1">
    <source>
        <dbReference type="HAMAP-Rule" id="MF_00071"/>
    </source>
</evidence>
<name>LEPA_DESDA</name>
<protein>
    <recommendedName>
        <fullName evidence="1">Elongation factor 4</fullName>
        <shortName evidence="1">EF-4</shortName>
        <ecNumber evidence="1">3.6.5.n1</ecNumber>
    </recommendedName>
    <alternativeName>
        <fullName evidence="1">Ribosomal back-translocase LepA</fullName>
    </alternativeName>
</protein>
<proteinExistence type="inferred from homology"/>
<gene>
    <name evidence="1" type="primary">lepA</name>
    <name type="ordered locus">Ddes_2193</name>
</gene>
<feature type="chain" id="PRO_1000118048" description="Elongation factor 4">
    <location>
        <begin position="1"/>
        <end position="601"/>
    </location>
</feature>
<feature type="domain" description="tr-type G">
    <location>
        <begin position="5"/>
        <end position="187"/>
    </location>
</feature>
<feature type="binding site" evidence="1">
    <location>
        <begin position="17"/>
        <end position="22"/>
    </location>
    <ligand>
        <name>GTP</name>
        <dbReference type="ChEBI" id="CHEBI:37565"/>
    </ligand>
</feature>
<feature type="binding site" evidence="1">
    <location>
        <begin position="134"/>
        <end position="137"/>
    </location>
    <ligand>
        <name>GTP</name>
        <dbReference type="ChEBI" id="CHEBI:37565"/>
    </ligand>
</feature>